<name>ENO_MYCVP</name>
<accession>A1TEE4</accession>
<gene>
    <name evidence="1" type="primary">eno</name>
    <name type="ordered locus">Mvan_4771</name>
</gene>
<proteinExistence type="inferred from homology"/>
<organism>
    <name type="scientific">Mycolicibacterium vanbaalenii (strain DSM 7251 / JCM 13017 / BCRC 16820 / KCTC 9966 / NRRL B-24157 / PYR-1)</name>
    <name type="common">Mycobacterium vanbaalenii</name>
    <dbReference type="NCBI Taxonomy" id="350058"/>
    <lineage>
        <taxon>Bacteria</taxon>
        <taxon>Bacillati</taxon>
        <taxon>Actinomycetota</taxon>
        <taxon>Actinomycetes</taxon>
        <taxon>Mycobacteriales</taxon>
        <taxon>Mycobacteriaceae</taxon>
        <taxon>Mycolicibacterium</taxon>
    </lineage>
</organism>
<comment type="function">
    <text evidence="1">Catalyzes the reversible conversion of 2-phosphoglycerate (2-PG) into phosphoenolpyruvate (PEP). It is essential for the degradation of carbohydrates via glycolysis.</text>
</comment>
<comment type="catalytic activity">
    <reaction evidence="1">
        <text>(2R)-2-phosphoglycerate = phosphoenolpyruvate + H2O</text>
        <dbReference type="Rhea" id="RHEA:10164"/>
        <dbReference type="ChEBI" id="CHEBI:15377"/>
        <dbReference type="ChEBI" id="CHEBI:58289"/>
        <dbReference type="ChEBI" id="CHEBI:58702"/>
        <dbReference type="EC" id="4.2.1.11"/>
    </reaction>
</comment>
<comment type="cofactor">
    <cofactor evidence="1">
        <name>Mg(2+)</name>
        <dbReference type="ChEBI" id="CHEBI:18420"/>
    </cofactor>
    <text evidence="1">Binds a second Mg(2+) ion via substrate during catalysis.</text>
</comment>
<comment type="pathway">
    <text evidence="1">Carbohydrate degradation; glycolysis; pyruvate from D-glyceraldehyde 3-phosphate: step 4/5.</text>
</comment>
<comment type="subcellular location">
    <subcellularLocation>
        <location evidence="1">Cytoplasm</location>
    </subcellularLocation>
    <subcellularLocation>
        <location evidence="1">Secreted</location>
    </subcellularLocation>
    <subcellularLocation>
        <location evidence="1">Cell surface</location>
    </subcellularLocation>
    <text evidence="1">Fractions of enolase are present in both the cytoplasm and on the cell surface.</text>
</comment>
<comment type="similarity">
    <text evidence="1">Belongs to the enolase family.</text>
</comment>
<sequence length="429" mass="44976">MPIIEQVGAREILDSRGNPTVEVEVGLLDGTVSRAAVPSGASTGEHEAVELRDGGSRYLGKGVEKAVEAVLDEIAPAVIGLGADEQRLVDQALVDLDGTPDKSRLGANAILGVSLAVAKAAAQSAELPLFRYVGGPNAHILPVPMMNIINGGAHADTGVDVQEFMIAPIGAPSFKEALRWGAEVYHSLKSVLKKQGLATGLGDEGGFAPDLPGTRAALDLIGTAIEAAGLKVGSDVALALDVAATEFYTEGTGYAFEKETRTAEQMAAFYAQLLEAYPLVSIEDPLSEDDWDGWVALTAAIGDKVQLVGDDLFVTNPERLEDGIERGAANALLVKVNQIGTLTETLDAVSLAHNAGYKTMMSHRSGETEDTTIADLAVAVGSGQIKTGAPARSERVAKYNQLLRIEEELGDAARYAGDLAFPRFSVETK</sequence>
<evidence type="ECO:0000255" key="1">
    <source>
        <dbReference type="HAMAP-Rule" id="MF_00318"/>
    </source>
</evidence>
<keyword id="KW-0963">Cytoplasm</keyword>
<keyword id="KW-0324">Glycolysis</keyword>
<keyword id="KW-0456">Lyase</keyword>
<keyword id="KW-0460">Magnesium</keyword>
<keyword id="KW-0479">Metal-binding</keyword>
<keyword id="KW-0964">Secreted</keyword>
<reference key="1">
    <citation type="submission" date="2006-12" db="EMBL/GenBank/DDBJ databases">
        <title>Complete sequence of Mycobacterium vanbaalenii PYR-1.</title>
        <authorList>
            <consortium name="US DOE Joint Genome Institute"/>
            <person name="Copeland A."/>
            <person name="Lucas S."/>
            <person name="Lapidus A."/>
            <person name="Barry K."/>
            <person name="Detter J.C."/>
            <person name="Glavina del Rio T."/>
            <person name="Hammon N."/>
            <person name="Israni S."/>
            <person name="Dalin E."/>
            <person name="Tice H."/>
            <person name="Pitluck S."/>
            <person name="Singan V."/>
            <person name="Schmutz J."/>
            <person name="Larimer F."/>
            <person name="Land M."/>
            <person name="Hauser L."/>
            <person name="Kyrpides N."/>
            <person name="Anderson I.J."/>
            <person name="Miller C."/>
            <person name="Richardson P."/>
        </authorList>
    </citation>
    <scope>NUCLEOTIDE SEQUENCE [LARGE SCALE GENOMIC DNA]</scope>
    <source>
        <strain>DSM 7251 / JCM 13017 / BCRC 16820 / KCTC 9966 / NRRL B-24157 / PYR-1</strain>
    </source>
</reference>
<protein>
    <recommendedName>
        <fullName evidence="1">Enolase</fullName>
        <ecNumber evidence="1">4.2.1.11</ecNumber>
    </recommendedName>
    <alternativeName>
        <fullName evidence="1">2-phospho-D-glycerate hydro-lyase</fullName>
    </alternativeName>
    <alternativeName>
        <fullName evidence="1">2-phosphoglycerate dehydratase</fullName>
    </alternativeName>
</protein>
<feature type="chain" id="PRO_1000019226" description="Enolase">
    <location>
        <begin position="1"/>
        <end position="429"/>
    </location>
</feature>
<feature type="active site" description="Proton donor" evidence="1">
    <location>
        <position position="204"/>
    </location>
</feature>
<feature type="active site" description="Proton acceptor" evidence="1">
    <location>
        <position position="335"/>
    </location>
</feature>
<feature type="binding site" evidence="1">
    <location>
        <position position="162"/>
    </location>
    <ligand>
        <name>(2R)-2-phosphoglycerate</name>
        <dbReference type="ChEBI" id="CHEBI:58289"/>
    </ligand>
</feature>
<feature type="binding site" evidence="1">
    <location>
        <position position="241"/>
    </location>
    <ligand>
        <name>Mg(2+)</name>
        <dbReference type="ChEBI" id="CHEBI:18420"/>
    </ligand>
</feature>
<feature type="binding site" evidence="1">
    <location>
        <position position="283"/>
    </location>
    <ligand>
        <name>Mg(2+)</name>
        <dbReference type="ChEBI" id="CHEBI:18420"/>
    </ligand>
</feature>
<feature type="binding site" evidence="1">
    <location>
        <position position="310"/>
    </location>
    <ligand>
        <name>Mg(2+)</name>
        <dbReference type="ChEBI" id="CHEBI:18420"/>
    </ligand>
</feature>
<feature type="binding site" evidence="1">
    <location>
        <position position="335"/>
    </location>
    <ligand>
        <name>(2R)-2-phosphoglycerate</name>
        <dbReference type="ChEBI" id="CHEBI:58289"/>
    </ligand>
</feature>
<feature type="binding site" evidence="1">
    <location>
        <position position="364"/>
    </location>
    <ligand>
        <name>(2R)-2-phosphoglycerate</name>
        <dbReference type="ChEBI" id="CHEBI:58289"/>
    </ligand>
</feature>
<feature type="binding site" evidence="1">
    <location>
        <position position="365"/>
    </location>
    <ligand>
        <name>(2R)-2-phosphoglycerate</name>
        <dbReference type="ChEBI" id="CHEBI:58289"/>
    </ligand>
</feature>
<feature type="binding site" evidence="1">
    <location>
        <position position="386"/>
    </location>
    <ligand>
        <name>(2R)-2-phosphoglycerate</name>
        <dbReference type="ChEBI" id="CHEBI:58289"/>
    </ligand>
</feature>
<dbReference type="EC" id="4.2.1.11" evidence="1"/>
<dbReference type="EMBL" id="CP000511">
    <property type="protein sequence ID" value="ABM15544.1"/>
    <property type="molecule type" value="Genomic_DNA"/>
</dbReference>
<dbReference type="RefSeq" id="WP_011781918.1">
    <property type="nucleotide sequence ID" value="NZ_JACKSD010000370.1"/>
</dbReference>
<dbReference type="SMR" id="A1TEE4"/>
<dbReference type="STRING" id="350058.Mvan_4771"/>
<dbReference type="KEGG" id="mva:Mvan_4771"/>
<dbReference type="eggNOG" id="COG0148">
    <property type="taxonomic scope" value="Bacteria"/>
</dbReference>
<dbReference type="HOGENOM" id="CLU_031223_2_1_11"/>
<dbReference type="UniPathway" id="UPA00109">
    <property type="reaction ID" value="UER00187"/>
</dbReference>
<dbReference type="Proteomes" id="UP000009159">
    <property type="component" value="Chromosome"/>
</dbReference>
<dbReference type="GO" id="GO:0009986">
    <property type="term" value="C:cell surface"/>
    <property type="evidence" value="ECO:0007669"/>
    <property type="project" value="UniProtKB-SubCell"/>
</dbReference>
<dbReference type="GO" id="GO:0005576">
    <property type="term" value="C:extracellular region"/>
    <property type="evidence" value="ECO:0007669"/>
    <property type="project" value="UniProtKB-SubCell"/>
</dbReference>
<dbReference type="GO" id="GO:0000015">
    <property type="term" value="C:phosphopyruvate hydratase complex"/>
    <property type="evidence" value="ECO:0007669"/>
    <property type="project" value="InterPro"/>
</dbReference>
<dbReference type="GO" id="GO:0000287">
    <property type="term" value="F:magnesium ion binding"/>
    <property type="evidence" value="ECO:0007669"/>
    <property type="project" value="UniProtKB-UniRule"/>
</dbReference>
<dbReference type="GO" id="GO:0004634">
    <property type="term" value="F:phosphopyruvate hydratase activity"/>
    <property type="evidence" value="ECO:0007669"/>
    <property type="project" value="UniProtKB-UniRule"/>
</dbReference>
<dbReference type="GO" id="GO:0006096">
    <property type="term" value="P:glycolytic process"/>
    <property type="evidence" value="ECO:0007669"/>
    <property type="project" value="UniProtKB-UniRule"/>
</dbReference>
<dbReference type="CDD" id="cd03313">
    <property type="entry name" value="enolase"/>
    <property type="match status" value="1"/>
</dbReference>
<dbReference type="FunFam" id="3.20.20.120:FF:000001">
    <property type="entry name" value="Enolase"/>
    <property type="match status" value="1"/>
</dbReference>
<dbReference type="FunFam" id="3.30.390.10:FF:000001">
    <property type="entry name" value="Enolase"/>
    <property type="match status" value="1"/>
</dbReference>
<dbReference type="Gene3D" id="3.20.20.120">
    <property type="entry name" value="Enolase-like C-terminal domain"/>
    <property type="match status" value="1"/>
</dbReference>
<dbReference type="Gene3D" id="3.30.390.10">
    <property type="entry name" value="Enolase-like, N-terminal domain"/>
    <property type="match status" value="1"/>
</dbReference>
<dbReference type="HAMAP" id="MF_00318">
    <property type="entry name" value="Enolase"/>
    <property type="match status" value="1"/>
</dbReference>
<dbReference type="InterPro" id="IPR000941">
    <property type="entry name" value="Enolase"/>
</dbReference>
<dbReference type="InterPro" id="IPR036849">
    <property type="entry name" value="Enolase-like_C_sf"/>
</dbReference>
<dbReference type="InterPro" id="IPR029017">
    <property type="entry name" value="Enolase-like_N"/>
</dbReference>
<dbReference type="InterPro" id="IPR020810">
    <property type="entry name" value="Enolase_C"/>
</dbReference>
<dbReference type="InterPro" id="IPR020809">
    <property type="entry name" value="Enolase_CS"/>
</dbReference>
<dbReference type="InterPro" id="IPR020811">
    <property type="entry name" value="Enolase_N"/>
</dbReference>
<dbReference type="NCBIfam" id="TIGR01060">
    <property type="entry name" value="eno"/>
    <property type="match status" value="1"/>
</dbReference>
<dbReference type="PANTHER" id="PTHR11902">
    <property type="entry name" value="ENOLASE"/>
    <property type="match status" value="1"/>
</dbReference>
<dbReference type="PANTHER" id="PTHR11902:SF1">
    <property type="entry name" value="ENOLASE"/>
    <property type="match status" value="1"/>
</dbReference>
<dbReference type="Pfam" id="PF00113">
    <property type="entry name" value="Enolase_C"/>
    <property type="match status" value="1"/>
</dbReference>
<dbReference type="Pfam" id="PF03952">
    <property type="entry name" value="Enolase_N"/>
    <property type="match status" value="1"/>
</dbReference>
<dbReference type="PIRSF" id="PIRSF001400">
    <property type="entry name" value="Enolase"/>
    <property type="match status" value="1"/>
</dbReference>
<dbReference type="PRINTS" id="PR00148">
    <property type="entry name" value="ENOLASE"/>
</dbReference>
<dbReference type="SFLD" id="SFLDF00002">
    <property type="entry name" value="enolase"/>
    <property type="match status" value="1"/>
</dbReference>
<dbReference type="SFLD" id="SFLDG00178">
    <property type="entry name" value="enolase"/>
    <property type="match status" value="1"/>
</dbReference>
<dbReference type="SMART" id="SM01192">
    <property type="entry name" value="Enolase_C"/>
    <property type="match status" value="1"/>
</dbReference>
<dbReference type="SMART" id="SM01193">
    <property type="entry name" value="Enolase_N"/>
    <property type="match status" value="1"/>
</dbReference>
<dbReference type="SUPFAM" id="SSF51604">
    <property type="entry name" value="Enolase C-terminal domain-like"/>
    <property type="match status" value="1"/>
</dbReference>
<dbReference type="SUPFAM" id="SSF54826">
    <property type="entry name" value="Enolase N-terminal domain-like"/>
    <property type="match status" value="1"/>
</dbReference>
<dbReference type="PROSITE" id="PS00164">
    <property type="entry name" value="ENOLASE"/>
    <property type="match status" value="1"/>
</dbReference>